<geneLocation type="chloroplast"/>
<evidence type="ECO:0000250" key="1"/>
<evidence type="ECO:0000305" key="2"/>
<feature type="chain" id="PRO_0000305777" description="Small ribosomal subunit protein uS8c">
    <location>
        <begin position="1"/>
        <end position="132"/>
    </location>
</feature>
<organism>
    <name type="scientific">Dioscorea elephantipes</name>
    <name type="common">Elephant's foot yam</name>
    <name type="synonym">Testudinaria elephantipes</name>
    <dbReference type="NCBI Taxonomy" id="145284"/>
    <lineage>
        <taxon>Eukaryota</taxon>
        <taxon>Viridiplantae</taxon>
        <taxon>Streptophyta</taxon>
        <taxon>Embryophyta</taxon>
        <taxon>Tracheophyta</taxon>
        <taxon>Spermatophyta</taxon>
        <taxon>Magnoliopsida</taxon>
        <taxon>Liliopsida</taxon>
        <taxon>Dioscoreales</taxon>
        <taxon>Dioscoreaceae</taxon>
        <taxon>Dioscorea</taxon>
    </lineage>
</organism>
<sequence>MGRDTIANIITSIRNADMDKKGTVRIASTNITENIVKILLREGFIENVRKHQENQRFFLVSTLRHRRTSKGVYRTILKRISRPGLRIYSNYQRIPKILGGIGIVILSTSQGIMTDREARLKKIGGEILCYIW</sequence>
<accession>A6MMP3</accession>
<keyword id="KW-0150">Chloroplast</keyword>
<keyword id="KW-0934">Plastid</keyword>
<keyword id="KW-0687">Ribonucleoprotein</keyword>
<keyword id="KW-0689">Ribosomal protein</keyword>
<keyword id="KW-0694">RNA-binding</keyword>
<keyword id="KW-0699">rRNA-binding</keyword>
<dbReference type="EMBL" id="EF380353">
    <property type="protein sequence ID" value="ABR01465.1"/>
    <property type="molecule type" value="Genomic_DNA"/>
</dbReference>
<dbReference type="RefSeq" id="YP_001294388.1">
    <property type="nucleotide sequence ID" value="NC_009601.1"/>
</dbReference>
<dbReference type="SMR" id="A6MMP3"/>
<dbReference type="GeneID" id="5236583"/>
<dbReference type="GO" id="GO:0009507">
    <property type="term" value="C:chloroplast"/>
    <property type="evidence" value="ECO:0007669"/>
    <property type="project" value="UniProtKB-SubCell"/>
</dbReference>
<dbReference type="GO" id="GO:1990904">
    <property type="term" value="C:ribonucleoprotein complex"/>
    <property type="evidence" value="ECO:0007669"/>
    <property type="project" value="UniProtKB-KW"/>
</dbReference>
<dbReference type="GO" id="GO:0005840">
    <property type="term" value="C:ribosome"/>
    <property type="evidence" value="ECO:0007669"/>
    <property type="project" value="UniProtKB-KW"/>
</dbReference>
<dbReference type="GO" id="GO:0019843">
    <property type="term" value="F:rRNA binding"/>
    <property type="evidence" value="ECO:0007669"/>
    <property type="project" value="UniProtKB-UniRule"/>
</dbReference>
<dbReference type="GO" id="GO:0003735">
    <property type="term" value="F:structural constituent of ribosome"/>
    <property type="evidence" value="ECO:0007669"/>
    <property type="project" value="InterPro"/>
</dbReference>
<dbReference type="GO" id="GO:0006412">
    <property type="term" value="P:translation"/>
    <property type="evidence" value="ECO:0007669"/>
    <property type="project" value="UniProtKB-UniRule"/>
</dbReference>
<dbReference type="FunFam" id="3.30.1490.10:FF:000001">
    <property type="entry name" value="30S ribosomal protein S8"/>
    <property type="match status" value="1"/>
</dbReference>
<dbReference type="FunFam" id="3.30.1370.30:FF:000004">
    <property type="entry name" value="30S ribosomal protein S8, chloroplastic"/>
    <property type="match status" value="1"/>
</dbReference>
<dbReference type="Gene3D" id="3.30.1370.30">
    <property type="match status" value="1"/>
</dbReference>
<dbReference type="Gene3D" id="3.30.1490.10">
    <property type="match status" value="1"/>
</dbReference>
<dbReference type="HAMAP" id="MF_01302_B">
    <property type="entry name" value="Ribosomal_uS8_B"/>
    <property type="match status" value="1"/>
</dbReference>
<dbReference type="InterPro" id="IPR000630">
    <property type="entry name" value="Ribosomal_uS8"/>
</dbReference>
<dbReference type="InterPro" id="IPR047863">
    <property type="entry name" value="Ribosomal_uS8_CS"/>
</dbReference>
<dbReference type="InterPro" id="IPR035987">
    <property type="entry name" value="Ribosomal_uS8_sf"/>
</dbReference>
<dbReference type="NCBIfam" id="NF001109">
    <property type="entry name" value="PRK00136.1"/>
    <property type="match status" value="1"/>
</dbReference>
<dbReference type="PANTHER" id="PTHR11758">
    <property type="entry name" value="40S RIBOSOMAL PROTEIN S15A"/>
    <property type="match status" value="1"/>
</dbReference>
<dbReference type="Pfam" id="PF00410">
    <property type="entry name" value="Ribosomal_S8"/>
    <property type="match status" value="1"/>
</dbReference>
<dbReference type="SUPFAM" id="SSF56047">
    <property type="entry name" value="Ribosomal protein S8"/>
    <property type="match status" value="1"/>
</dbReference>
<dbReference type="PROSITE" id="PS00053">
    <property type="entry name" value="RIBOSOMAL_S8"/>
    <property type="match status" value="1"/>
</dbReference>
<reference key="1">
    <citation type="journal article" date="2007" name="Mol. Phylogenet. Evol.">
        <title>Phylogenetic and evolutionary implications of complete chloroplast genome sequences of four early-diverging angiosperms: Buxus (Buxaceae), Chloranthus (Chloranthaceae), Dioscorea (Dioscoreaceae), and Illicium (Schisandraceae).</title>
        <authorList>
            <person name="Hansen D.R."/>
            <person name="Dastidar S.G."/>
            <person name="Cai Z."/>
            <person name="Penaflor C."/>
            <person name="Kuehl J.V."/>
            <person name="Boore J.L."/>
            <person name="Jansen R.K."/>
        </authorList>
    </citation>
    <scope>NUCLEOTIDE SEQUENCE [LARGE SCALE GENOMIC DNA]</scope>
</reference>
<proteinExistence type="inferred from homology"/>
<comment type="function">
    <text evidence="1">One of the primary rRNA binding proteins, it binds directly to 16S rRNA central domain where it helps coordinate assembly of the platform of the 30S subunit.</text>
</comment>
<comment type="subunit">
    <text evidence="1">Part of the 30S ribosomal subunit.</text>
</comment>
<comment type="subcellular location">
    <subcellularLocation>
        <location>Plastid</location>
        <location>Chloroplast</location>
    </subcellularLocation>
</comment>
<comment type="similarity">
    <text evidence="2">Belongs to the universal ribosomal protein uS8 family.</text>
</comment>
<gene>
    <name type="primary">rps8</name>
</gene>
<protein>
    <recommendedName>
        <fullName evidence="2">Small ribosomal subunit protein uS8c</fullName>
    </recommendedName>
    <alternativeName>
        <fullName>30S ribosomal protein S8, chloroplastic</fullName>
    </alternativeName>
</protein>
<name>RR8_DIOEL</name>